<name>HSE1_ASPFU</name>
<reference key="1">
    <citation type="journal article" date="2005" name="Nature">
        <title>Genomic sequence of the pathogenic and allergenic filamentous fungus Aspergillus fumigatus.</title>
        <authorList>
            <person name="Nierman W.C."/>
            <person name="Pain A."/>
            <person name="Anderson M.J."/>
            <person name="Wortman J.R."/>
            <person name="Kim H.S."/>
            <person name="Arroyo J."/>
            <person name="Berriman M."/>
            <person name="Abe K."/>
            <person name="Archer D.B."/>
            <person name="Bermejo C."/>
            <person name="Bennett J.W."/>
            <person name="Bowyer P."/>
            <person name="Chen D."/>
            <person name="Collins M."/>
            <person name="Coulsen R."/>
            <person name="Davies R."/>
            <person name="Dyer P.S."/>
            <person name="Farman M.L."/>
            <person name="Fedorova N."/>
            <person name="Fedorova N.D."/>
            <person name="Feldblyum T.V."/>
            <person name="Fischer R."/>
            <person name="Fosker N."/>
            <person name="Fraser A."/>
            <person name="Garcia J.L."/>
            <person name="Garcia M.J."/>
            <person name="Goble A."/>
            <person name="Goldman G.H."/>
            <person name="Gomi K."/>
            <person name="Griffith-Jones S."/>
            <person name="Gwilliam R."/>
            <person name="Haas B.J."/>
            <person name="Haas H."/>
            <person name="Harris D.E."/>
            <person name="Horiuchi H."/>
            <person name="Huang J."/>
            <person name="Humphray S."/>
            <person name="Jimenez J."/>
            <person name="Keller N."/>
            <person name="Khouri H."/>
            <person name="Kitamoto K."/>
            <person name="Kobayashi T."/>
            <person name="Konzack S."/>
            <person name="Kulkarni R."/>
            <person name="Kumagai T."/>
            <person name="Lafton A."/>
            <person name="Latge J.-P."/>
            <person name="Li W."/>
            <person name="Lord A."/>
            <person name="Lu C."/>
            <person name="Majoros W.H."/>
            <person name="May G.S."/>
            <person name="Miller B.L."/>
            <person name="Mohamoud Y."/>
            <person name="Molina M."/>
            <person name="Monod M."/>
            <person name="Mouyna I."/>
            <person name="Mulligan S."/>
            <person name="Murphy L.D."/>
            <person name="O'Neil S."/>
            <person name="Paulsen I."/>
            <person name="Penalva M.A."/>
            <person name="Pertea M."/>
            <person name="Price C."/>
            <person name="Pritchard B.L."/>
            <person name="Quail M.A."/>
            <person name="Rabbinowitsch E."/>
            <person name="Rawlins N."/>
            <person name="Rajandream M.A."/>
            <person name="Reichard U."/>
            <person name="Renauld H."/>
            <person name="Robson G.D."/>
            <person name="Rodriguez de Cordoba S."/>
            <person name="Rodriguez-Pena J.M."/>
            <person name="Ronning C.M."/>
            <person name="Rutter S."/>
            <person name="Salzberg S.L."/>
            <person name="Sanchez M."/>
            <person name="Sanchez-Ferrero J.C."/>
            <person name="Saunders D."/>
            <person name="Seeger K."/>
            <person name="Squares R."/>
            <person name="Squares S."/>
            <person name="Takeuchi M."/>
            <person name="Tekaia F."/>
            <person name="Turner G."/>
            <person name="Vazquez de Aldana C.R."/>
            <person name="Weidman J."/>
            <person name="White O."/>
            <person name="Woodward J.R."/>
            <person name="Yu J.-H."/>
            <person name="Fraser C.M."/>
            <person name="Galagan J.E."/>
            <person name="Asai K."/>
            <person name="Machida M."/>
            <person name="Hall N."/>
            <person name="Barrell B.G."/>
            <person name="Denning D.W."/>
        </authorList>
    </citation>
    <scope>NUCLEOTIDE SEQUENCE [LARGE SCALE GENOMIC DNA]</scope>
    <source>
        <strain>ATCC MYA-4609 / CBS 101355 / FGSC A1100 / Af293</strain>
    </source>
</reference>
<sequence length="584" mass="64447">MFRAQQNAFDDAVAKATDENLTSENWEYILDVCDKVAAEESGAKDAVAAMIKRLAHRNANVQLYTLELANALAQNCGPKIHRELASRSFTDALLRLANDRMFANNPDFGIMEQAYMKLKTQNPNLQPPSKPGKREITEADRQKEEEELQMALALSIREKPSAAPEPKAEPSTSVSEPASQTQTATSQAVPPGTSAATVSRVRALFDFQPSEPGELQFRKGDIIAVLESVYKDWWKGSLRGQTGIFPLNYVEKLPDPTVEELQREAQMEAEVFGQIKNVEKLLTLLSTRSSELNVQDNEEITSLYHSTLSIRPKLIELIGKYSQKKDEFTQLNEKFIKARRDYESLLEASMAHPAQPQYGRPGQAPYGYPGPAAPLGYPQGPPQSDPQRYFSPRPQDQTHMYPPTSHSPDPRGRTPPAGPSFPQHQQPPPDSYQPVHHRPESTYDNPQELGTSVYDSPVEHPSSSQRLPYPPSGAQVPPGVHQQFQHQQQEYPPSGYPPEDASKPPAAGFALQPPQQTLQQPPYPTAPGAHQPTPSHQPPPVPSTASKPTPYPSLTPGTPSGGEYQAYNPSQAGAANSNPNSYYR</sequence>
<feature type="chain" id="PRO_0000292487" description="Class E vacuolar protein-sorting machinery protein hse1">
    <location>
        <begin position="1"/>
        <end position="584"/>
    </location>
</feature>
<feature type="domain" description="VHS" evidence="3">
    <location>
        <begin position="16"/>
        <end position="151"/>
    </location>
</feature>
<feature type="domain" description="UIM" evidence="5">
    <location>
        <begin position="143"/>
        <end position="162"/>
    </location>
</feature>
<feature type="domain" description="SH3" evidence="2">
    <location>
        <begin position="196"/>
        <end position="255"/>
    </location>
</feature>
<feature type="region of interest" description="Disordered" evidence="4">
    <location>
        <begin position="121"/>
        <end position="145"/>
    </location>
</feature>
<feature type="region of interest" description="Disordered" evidence="4">
    <location>
        <begin position="158"/>
        <end position="193"/>
    </location>
</feature>
<feature type="region of interest" description="Disordered" evidence="4">
    <location>
        <begin position="354"/>
        <end position="584"/>
    </location>
</feature>
<feature type="compositionally biased region" description="Basic and acidic residues" evidence="4">
    <location>
        <begin position="132"/>
        <end position="144"/>
    </location>
</feature>
<feature type="compositionally biased region" description="Low complexity" evidence="4">
    <location>
        <begin position="161"/>
        <end position="171"/>
    </location>
</feature>
<feature type="compositionally biased region" description="Polar residues" evidence="4">
    <location>
        <begin position="172"/>
        <end position="188"/>
    </location>
</feature>
<feature type="compositionally biased region" description="Low complexity" evidence="4">
    <location>
        <begin position="354"/>
        <end position="378"/>
    </location>
</feature>
<feature type="compositionally biased region" description="Polar residues" evidence="4">
    <location>
        <begin position="442"/>
        <end position="454"/>
    </location>
</feature>
<feature type="compositionally biased region" description="Low complexity" evidence="4">
    <location>
        <begin position="475"/>
        <end position="489"/>
    </location>
</feature>
<feature type="compositionally biased region" description="Low complexity" evidence="4">
    <location>
        <begin position="510"/>
        <end position="534"/>
    </location>
</feature>
<feature type="compositionally biased region" description="Polar residues" evidence="4">
    <location>
        <begin position="567"/>
        <end position="584"/>
    </location>
</feature>
<accession>Q4WHP5</accession>
<organism>
    <name type="scientific">Aspergillus fumigatus (strain ATCC MYA-4609 / CBS 101355 / FGSC A1100 / Af293)</name>
    <name type="common">Neosartorya fumigata</name>
    <dbReference type="NCBI Taxonomy" id="330879"/>
    <lineage>
        <taxon>Eukaryota</taxon>
        <taxon>Fungi</taxon>
        <taxon>Dikarya</taxon>
        <taxon>Ascomycota</taxon>
        <taxon>Pezizomycotina</taxon>
        <taxon>Eurotiomycetes</taxon>
        <taxon>Eurotiomycetidae</taxon>
        <taxon>Eurotiales</taxon>
        <taxon>Aspergillaceae</taxon>
        <taxon>Aspergillus</taxon>
        <taxon>Aspergillus subgen. Fumigati</taxon>
    </lineage>
</organism>
<proteinExistence type="inferred from homology"/>
<evidence type="ECO:0000250" key="1"/>
<evidence type="ECO:0000255" key="2">
    <source>
        <dbReference type="PROSITE-ProRule" id="PRU00192"/>
    </source>
</evidence>
<evidence type="ECO:0000255" key="3">
    <source>
        <dbReference type="PROSITE-ProRule" id="PRU00218"/>
    </source>
</evidence>
<evidence type="ECO:0000256" key="4">
    <source>
        <dbReference type="SAM" id="MobiDB-lite"/>
    </source>
</evidence>
<evidence type="ECO:0000305" key="5"/>
<gene>
    <name type="primary">hse1</name>
    <name type="ORF">AFUA_2G04670</name>
</gene>
<dbReference type="EMBL" id="AAHF01000008">
    <property type="protein sequence ID" value="EAL87560.1"/>
    <property type="molecule type" value="Genomic_DNA"/>
</dbReference>
<dbReference type="RefSeq" id="XP_749598.1">
    <property type="nucleotide sequence ID" value="XM_744505.1"/>
</dbReference>
<dbReference type="SMR" id="Q4WHP5"/>
<dbReference type="FunCoup" id="Q4WHP5">
    <property type="interactions" value="337"/>
</dbReference>
<dbReference type="STRING" id="330879.Q4WHP5"/>
<dbReference type="EnsemblFungi" id="EAL87560">
    <property type="protein sequence ID" value="EAL87560"/>
    <property type="gene ID" value="AFUA_2G04670"/>
</dbReference>
<dbReference type="GeneID" id="3506680"/>
<dbReference type="KEGG" id="afm:AFUA_2G04670"/>
<dbReference type="eggNOG" id="KOG2199">
    <property type="taxonomic scope" value="Eukaryota"/>
</dbReference>
<dbReference type="HOGENOM" id="CLU_010104_1_1_1"/>
<dbReference type="InParanoid" id="Q4WHP5"/>
<dbReference type="OMA" id="QVYRDWW"/>
<dbReference type="OrthoDB" id="10255964at2759"/>
<dbReference type="Proteomes" id="UP000002530">
    <property type="component" value="Chromosome 2"/>
</dbReference>
<dbReference type="GO" id="GO:0010008">
    <property type="term" value="C:endosome membrane"/>
    <property type="evidence" value="ECO:0007669"/>
    <property type="project" value="UniProtKB-SubCell"/>
</dbReference>
<dbReference type="GO" id="GO:0033565">
    <property type="term" value="C:ESCRT-0 complex"/>
    <property type="evidence" value="ECO:0000318"/>
    <property type="project" value="GO_Central"/>
</dbReference>
<dbReference type="GO" id="GO:0035091">
    <property type="term" value="F:phosphatidylinositol binding"/>
    <property type="evidence" value="ECO:0007669"/>
    <property type="project" value="InterPro"/>
</dbReference>
<dbReference type="GO" id="GO:0043130">
    <property type="term" value="F:ubiquitin binding"/>
    <property type="evidence" value="ECO:0007669"/>
    <property type="project" value="InterPro"/>
</dbReference>
<dbReference type="GO" id="GO:0043328">
    <property type="term" value="P:protein transport to vacuole involved in ubiquitin-dependent protein catabolic process via the multivesicular body sorting pathway"/>
    <property type="evidence" value="ECO:0000318"/>
    <property type="project" value="GO_Central"/>
</dbReference>
<dbReference type="CDD" id="cd21386">
    <property type="entry name" value="GAT_Hse1"/>
    <property type="match status" value="1"/>
</dbReference>
<dbReference type="CDD" id="cd11805">
    <property type="entry name" value="SH3_GRB2_like_C"/>
    <property type="match status" value="1"/>
</dbReference>
<dbReference type="CDD" id="cd16978">
    <property type="entry name" value="VHS_HSE1"/>
    <property type="match status" value="1"/>
</dbReference>
<dbReference type="FunFam" id="2.30.30.40:FF:000072">
    <property type="entry name" value="Unconventional Myosin IB"/>
    <property type="match status" value="1"/>
</dbReference>
<dbReference type="Gene3D" id="1.20.5.1940">
    <property type="match status" value="1"/>
</dbReference>
<dbReference type="Gene3D" id="1.25.40.90">
    <property type="match status" value="1"/>
</dbReference>
<dbReference type="Gene3D" id="2.30.30.40">
    <property type="entry name" value="SH3 Domains"/>
    <property type="match status" value="1"/>
</dbReference>
<dbReference type="InterPro" id="IPR008942">
    <property type="entry name" value="ENTH_VHS"/>
</dbReference>
<dbReference type="InterPro" id="IPR004152">
    <property type="entry name" value="GAT_dom"/>
</dbReference>
<dbReference type="InterPro" id="IPR036028">
    <property type="entry name" value="SH3-like_dom_sf"/>
</dbReference>
<dbReference type="InterPro" id="IPR001452">
    <property type="entry name" value="SH3_domain"/>
</dbReference>
<dbReference type="InterPro" id="IPR050670">
    <property type="entry name" value="STAM"/>
</dbReference>
<dbReference type="InterPro" id="IPR002014">
    <property type="entry name" value="VHS_dom"/>
</dbReference>
<dbReference type="PANTHER" id="PTHR45929">
    <property type="entry name" value="JAK PATHWAY SIGNAL TRANSDUCTION ADAPTOR MOLECULE"/>
    <property type="match status" value="1"/>
</dbReference>
<dbReference type="PANTHER" id="PTHR45929:SF3">
    <property type="entry name" value="JAK PATHWAY SIGNAL TRANSDUCTION ADAPTOR MOLECULE"/>
    <property type="match status" value="1"/>
</dbReference>
<dbReference type="Pfam" id="PF03127">
    <property type="entry name" value="GAT"/>
    <property type="match status" value="1"/>
</dbReference>
<dbReference type="Pfam" id="PF00018">
    <property type="entry name" value="SH3_1"/>
    <property type="match status" value="1"/>
</dbReference>
<dbReference type="Pfam" id="PF00790">
    <property type="entry name" value="VHS"/>
    <property type="match status" value="1"/>
</dbReference>
<dbReference type="PRINTS" id="PR00452">
    <property type="entry name" value="SH3DOMAIN"/>
</dbReference>
<dbReference type="PRINTS" id="PR01887">
    <property type="entry name" value="SPECTRNALPHA"/>
</dbReference>
<dbReference type="SMART" id="SM00326">
    <property type="entry name" value="SH3"/>
    <property type="match status" value="1"/>
</dbReference>
<dbReference type="SMART" id="SM00288">
    <property type="entry name" value="VHS"/>
    <property type="match status" value="1"/>
</dbReference>
<dbReference type="SUPFAM" id="SSF48464">
    <property type="entry name" value="ENTH/VHS domain"/>
    <property type="match status" value="1"/>
</dbReference>
<dbReference type="SUPFAM" id="SSF50044">
    <property type="entry name" value="SH3-domain"/>
    <property type="match status" value="1"/>
</dbReference>
<dbReference type="PROSITE" id="PS50002">
    <property type="entry name" value="SH3"/>
    <property type="match status" value="1"/>
</dbReference>
<dbReference type="PROSITE" id="PS50179">
    <property type="entry name" value="VHS"/>
    <property type="match status" value="1"/>
</dbReference>
<comment type="function">
    <text evidence="1">Component of the ESCRT-0 complex which is the sorting receptor for ubiquitinated cargo proteins at the multivesicular body (MVB).</text>
</comment>
<comment type="subunit">
    <text evidence="1">Component of the ESCRT-0 complex composed of HSE1 and VPS27.</text>
</comment>
<comment type="subcellular location">
    <subcellularLocation>
        <location evidence="1">Endosome membrane</location>
        <topology evidence="1">Peripheral membrane protein</topology>
        <orientation evidence="1">Cytoplasmic side</orientation>
    </subcellularLocation>
</comment>
<comment type="similarity">
    <text evidence="5">Belongs to the STAM family.</text>
</comment>
<protein>
    <recommendedName>
        <fullName>Class E vacuolar protein-sorting machinery protein hse1</fullName>
    </recommendedName>
</protein>
<keyword id="KW-0967">Endosome</keyword>
<keyword id="KW-0472">Membrane</keyword>
<keyword id="KW-0653">Protein transport</keyword>
<keyword id="KW-1185">Reference proteome</keyword>
<keyword id="KW-0728">SH3 domain</keyword>
<keyword id="KW-0813">Transport</keyword>